<reference key="1">
    <citation type="journal article" date="2002" name="Nature">
        <title>The genome sequence of Schizosaccharomyces pombe.</title>
        <authorList>
            <person name="Wood V."/>
            <person name="Gwilliam R."/>
            <person name="Rajandream M.A."/>
            <person name="Lyne M.H."/>
            <person name="Lyne R."/>
            <person name="Stewart A."/>
            <person name="Sgouros J.G."/>
            <person name="Peat N."/>
            <person name="Hayles J."/>
            <person name="Baker S.G."/>
            <person name="Basham D."/>
            <person name="Bowman S."/>
            <person name="Brooks K."/>
            <person name="Brown D."/>
            <person name="Brown S."/>
            <person name="Chillingworth T."/>
            <person name="Churcher C.M."/>
            <person name="Collins M."/>
            <person name="Connor R."/>
            <person name="Cronin A."/>
            <person name="Davis P."/>
            <person name="Feltwell T."/>
            <person name="Fraser A."/>
            <person name="Gentles S."/>
            <person name="Goble A."/>
            <person name="Hamlin N."/>
            <person name="Harris D.E."/>
            <person name="Hidalgo J."/>
            <person name="Hodgson G."/>
            <person name="Holroyd S."/>
            <person name="Hornsby T."/>
            <person name="Howarth S."/>
            <person name="Huckle E.J."/>
            <person name="Hunt S."/>
            <person name="Jagels K."/>
            <person name="James K.D."/>
            <person name="Jones L."/>
            <person name="Jones M."/>
            <person name="Leather S."/>
            <person name="McDonald S."/>
            <person name="McLean J."/>
            <person name="Mooney P."/>
            <person name="Moule S."/>
            <person name="Mungall K.L."/>
            <person name="Murphy L.D."/>
            <person name="Niblett D."/>
            <person name="Odell C."/>
            <person name="Oliver K."/>
            <person name="O'Neil S."/>
            <person name="Pearson D."/>
            <person name="Quail M.A."/>
            <person name="Rabbinowitsch E."/>
            <person name="Rutherford K.M."/>
            <person name="Rutter S."/>
            <person name="Saunders D."/>
            <person name="Seeger K."/>
            <person name="Sharp S."/>
            <person name="Skelton J."/>
            <person name="Simmonds M.N."/>
            <person name="Squares R."/>
            <person name="Squares S."/>
            <person name="Stevens K."/>
            <person name="Taylor K."/>
            <person name="Taylor R.G."/>
            <person name="Tivey A."/>
            <person name="Walsh S.V."/>
            <person name="Warren T."/>
            <person name="Whitehead S."/>
            <person name="Woodward J.R."/>
            <person name="Volckaert G."/>
            <person name="Aert R."/>
            <person name="Robben J."/>
            <person name="Grymonprez B."/>
            <person name="Weltjens I."/>
            <person name="Vanstreels E."/>
            <person name="Rieger M."/>
            <person name="Schaefer M."/>
            <person name="Mueller-Auer S."/>
            <person name="Gabel C."/>
            <person name="Fuchs M."/>
            <person name="Duesterhoeft A."/>
            <person name="Fritzc C."/>
            <person name="Holzer E."/>
            <person name="Moestl D."/>
            <person name="Hilbert H."/>
            <person name="Borzym K."/>
            <person name="Langer I."/>
            <person name="Beck A."/>
            <person name="Lehrach H."/>
            <person name="Reinhardt R."/>
            <person name="Pohl T.M."/>
            <person name="Eger P."/>
            <person name="Zimmermann W."/>
            <person name="Wedler H."/>
            <person name="Wambutt R."/>
            <person name="Purnelle B."/>
            <person name="Goffeau A."/>
            <person name="Cadieu E."/>
            <person name="Dreano S."/>
            <person name="Gloux S."/>
            <person name="Lelaure V."/>
            <person name="Mottier S."/>
            <person name="Galibert F."/>
            <person name="Aves S.J."/>
            <person name="Xiang Z."/>
            <person name="Hunt C."/>
            <person name="Moore K."/>
            <person name="Hurst S.M."/>
            <person name="Lucas M."/>
            <person name="Rochet M."/>
            <person name="Gaillardin C."/>
            <person name="Tallada V.A."/>
            <person name="Garzon A."/>
            <person name="Thode G."/>
            <person name="Daga R.R."/>
            <person name="Cruzado L."/>
            <person name="Jimenez J."/>
            <person name="Sanchez M."/>
            <person name="del Rey F."/>
            <person name="Benito J."/>
            <person name="Dominguez A."/>
            <person name="Revuelta J.L."/>
            <person name="Moreno S."/>
            <person name="Armstrong J."/>
            <person name="Forsburg S.L."/>
            <person name="Cerutti L."/>
            <person name="Lowe T."/>
            <person name="McCombie W.R."/>
            <person name="Paulsen I."/>
            <person name="Potashkin J."/>
            <person name="Shpakovski G.V."/>
            <person name="Ussery D."/>
            <person name="Barrell B.G."/>
            <person name="Nurse P."/>
        </authorList>
    </citation>
    <scope>NUCLEOTIDE SEQUENCE [LARGE SCALE GENOMIC DNA]</scope>
    <source>
        <strain>972 / ATCC 24843</strain>
    </source>
</reference>
<reference key="2">
    <citation type="journal article" date="2005" name="Biochem. Biophys. Res. Commun.">
        <title>Characterization of O-mannosyltransferase family in Schizosaccharomyces pombe.</title>
        <authorList>
            <person name="Tanaka N."/>
            <person name="Fujita Y."/>
            <person name="Suzuki S."/>
            <person name="Morishita M."/>
            <person name="Giga-Hama Y."/>
            <person name="Shimoda C."/>
            <person name="Takegawa K."/>
        </authorList>
    </citation>
    <scope>FUNCTION</scope>
    <scope>SUBCELLULAR LOCATION</scope>
</reference>
<reference key="3">
    <citation type="journal article" date="2005" name="Mol. Microbiol.">
        <title>Protein O-mannosylation is crucial for cell wall integrity, septation and viability in fission yeast.</title>
        <authorList>
            <person name="Willer T."/>
            <person name="Brandl M."/>
            <person name="Sipiczki M."/>
            <person name="Strahl S."/>
        </authorList>
    </citation>
    <scope>FUNCTION</scope>
</reference>
<reference key="4">
    <citation type="journal article" date="2008" name="J. Proteome Res.">
        <title>Phosphoproteome analysis of fission yeast.</title>
        <authorList>
            <person name="Wilson-Grady J.T."/>
            <person name="Villen J."/>
            <person name="Gygi S.P."/>
        </authorList>
    </citation>
    <scope>PHOSPHORYLATION [LARGE SCALE ANALYSIS] AT THR-451</scope>
    <scope>IDENTIFICATION BY MASS SPECTROMETRY</scope>
</reference>
<organism>
    <name type="scientific">Schizosaccharomyces pombe (strain 972 / ATCC 24843)</name>
    <name type="common">Fission yeast</name>
    <dbReference type="NCBI Taxonomy" id="284812"/>
    <lineage>
        <taxon>Eukaryota</taxon>
        <taxon>Fungi</taxon>
        <taxon>Dikarya</taxon>
        <taxon>Ascomycota</taxon>
        <taxon>Taphrinomycotina</taxon>
        <taxon>Schizosaccharomycetes</taxon>
        <taxon>Schizosaccharomycetales</taxon>
        <taxon>Schizosaccharomycetaceae</taxon>
        <taxon>Schizosaccharomyces</taxon>
    </lineage>
</organism>
<keyword id="KW-0256">Endoplasmic reticulum</keyword>
<keyword id="KW-0325">Glycoprotein</keyword>
<keyword id="KW-0328">Glycosyltransferase</keyword>
<keyword id="KW-0472">Membrane</keyword>
<keyword id="KW-0539">Nucleus</keyword>
<keyword id="KW-0597">Phosphoprotein</keyword>
<keyword id="KW-1185">Reference proteome</keyword>
<keyword id="KW-0677">Repeat</keyword>
<keyword id="KW-0808">Transferase</keyword>
<keyword id="KW-0812">Transmembrane</keyword>
<keyword id="KW-1133">Transmembrane helix</keyword>
<accession>O13898</accession>
<gene>
    <name type="primary">ogm1</name>
    <name type="synonym">oma1</name>
    <name type="ORF">SPAC22A12.07c</name>
</gene>
<feature type="chain" id="PRO_0000121499" description="Dolichyl-phosphate-mannose--protein mannosyltransferase 1">
    <location>
        <begin position="1"/>
        <end position="893"/>
    </location>
</feature>
<feature type="transmembrane region" description="Helical" evidence="1">
    <location>
        <begin position="29"/>
        <end position="49"/>
    </location>
</feature>
<feature type="transmembrane region" description="Helical" evidence="1">
    <location>
        <begin position="77"/>
        <end position="97"/>
    </location>
</feature>
<feature type="transmembrane region" description="Helical" evidence="1">
    <location>
        <begin position="124"/>
        <end position="144"/>
    </location>
</feature>
<feature type="transmembrane region" description="Helical" evidence="1">
    <location>
        <begin position="147"/>
        <end position="167"/>
    </location>
</feature>
<feature type="transmembrane region" description="Helical" evidence="1">
    <location>
        <begin position="170"/>
        <end position="190"/>
    </location>
</feature>
<feature type="transmembrane region" description="Helical" evidence="1">
    <location>
        <begin position="224"/>
        <end position="244"/>
    </location>
</feature>
<feature type="transmembrane region" description="Helical" evidence="1">
    <location>
        <begin position="258"/>
        <end position="278"/>
    </location>
</feature>
<feature type="transmembrane region" description="Helical" evidence="1">
    <location>
        <begin position="573"/>
        <end position="593"/>
    </location>
</feature>
<feature type="transmembrane region" description="Helical" evidence="1">
    <location>
        <begin position="610"/>
        <end position="630"/>
    </location>
</feature>
<feature type="transmembrane region" description="Helical" evidence="1">
    <location>
        <begin position="643"/>
        <end position="663"/>
    </location>
</feature>
<feature type="transmembrane region" description="Helical" evidence="1">
    <location>
        <begin position="671"/>
        <end position="691"/>
    </location>
</feature>
<feature type="domain" description="MIR 1" evidence="2">
    <location>
        <begin position="310"/>
        <end position="364"/>
    </location>
</feature>
<feature type="domain" description="MIR 2" evidence="2">
    <location>
        <begin position="374"/>
        <end position="433"/>
    </location>
</feature>
<feature type="domain" description="MIR 3" evidence="2">
    <location>
        <begin position="443"/>
        <end position="499"/>
    </location>
</feature>
<feature type="region of interest" description="Disordered" evidence="3">
    <location>
        <begin position="785"/>
        <end position="893"/>
    </location>
</feature>
<feature type="compositionally biased region" description="Basic and acidic residues" evidence="3">
    <location>
        <begin position="786"/>
        <end position="806"/>
    </location>
</feature>
<feature type="compositionally biased region" description="Low complexity" evidence="3">
    <location>
        <begin position="807"/>
        <end position="823"/>
    </location>
</feature>
<feature type="compositionally biased region" description="Low complexity" evidence="3">
    <location>
        <begin position="854"/>
        <end position="864"/>
    </location>
</feature>
<feature type="compositionally biased region" description="Polar residues" evidence="3">
    <location>
        <begin position="868"/>
        <end position="878"/>
    </location>
</feature>
<feature type="modified residue" description="Phosphothreonine" evidence="6">
    <location>
        <position position="451"/>
    </location>
</feature>
<feature type="glycosylation site" description="N-linked (GlcNAc...) asparagine" evidence="1">
    <location>
        <position position="370"/>
    </location>
</feature>
<feature type="glycosylation site" description="N-linked (GlcNAc...) asparagine" evidence="1">
    <location>
        <position position="443"/>
    </location>
</feature>
<feature type="glycosylation site" description="N-linked (GlcNAc...) asparagine" evidence="1">
    <location>
        <position position="665"/>
    </location>
</feature>
<feature type="glycosylation site" description="N-linked (GlcNAc...) asparagine" evidence="1">
    <location>
        <position position="720"/>
    </location>
</feature>
<proteinExistence type="evidence at protein level"/>
<comment type="function">
    <text evidence="4 5">Transfers mannose from Dol-P-mannose to Ser or Thr residues on proteins. Required for normal cell growth and septum formation. Shown to actively O-mannosylate wsc1.</text>
</comment>
<comment type="catalytic activity">
    <reaction>
        <text>a di-trans,poly-cis-dolichyl beta-D-mannosyl phosphate + L-seryl-[protein] = 3-O-(alpha-D-mannosyl)-L-seryl-[protein] + a di-trans,poly-cis-dolichyl phosphate + H(+)</text>
        <dbReference type="Rhea" id="RHEA:17377"/>
        <dbReference type="Rhea" id="RHEA-COMP:9863"/>
        <dbReference type="Rhea" id="RHEA-COMP:13546"/>
        <dbReference type="Rhea" id="RHEA-COMP:19498"/>
        <dbReference type="Rhea" id="RHEA-COMP:19501"/>
        <dbReference type="ChEBI" id="CHEBI:15378"/>
        <dbReference type="ChEBI" id="CHEBI:29999"/>
        <dbReference type="ChEBI" id="CHEBI:57683"/>
        <dbReference type="ChEBI" id="CHEBI:58211"/>
        <dbReference type="ChEBI" id="CHEBI:137321"/>
        <dbReference type="EC" id="2.4.1.109"/>
    </reaction>
</comment>
<comment type="catalytic activity">
    <reaction>
        <text>a di-trans,poly-cis-dolichyl beta-D-mannosyl phosphate + L-threonyl-[protein] = 3-O-(alpha-D-mannosyl)-L-threonyl-[protein] + a di-trans,poly-cis-dolichyl phosphate + H(+)</text>
        <dbReference type="Rhea" id="RHEA:53396"/>
        <dbReference type="Rhea" id="RHEA-COMP:11060"/>
        <dbReference type="Rhea" id="RHEA-COMP:13547"/>
        <dbReference type="Rhea" id="RHEA-COMP:19498"/>
        <dbReference type="Rhea" id="RHEA-COMP:19501"/>
        <dbReference type="ChEBI" id="CHEBI:15378"/>
        <dbReference type="ChEBI" id="CHEBI:30013"/>
        <dbReference type="ChEBI" id="CHEBI:57683"/>
        <dbReference type="ChEBI" id="CHEBI:58211"/>
        <dbReference type="ChEBI" id="CHEBI:137323"/>
        <dbReference type="EC" id="2.4.1.109"/>
    </reaction>
</comment>
<comment type="pathway">
    <text>Protein modification; protein glycosylation.</text>
</comment>
<comment type="subcellular location">
    <subcellularLocation>
        <location evidence="4">Endoplasmic reticulum membrane</location>
        <topology evidence="4">Multi-pass membrane protein</topology>
    </subcellularLocation>
    <subcellularLocation>
        <location evidence="4">Nucleus membrane</location>
        <topology evidence="4">Multi-pass membrane protein</topology>
    </subcellularLocation>
</comment>
<comment type="similarity">
    <text evidence="7">Belongs to the glycosyltransferase 39 family.</text>
</comment>
<evidence type="ECO:0000255" key="1"/>
<evidence type="ECO:0000255" key="2">
    <source>
        <dbReference type="PROSITE-ProRule" id="PRU00131"/>
    </source>
</evidence>
<evidence type="ECO:0000256" key="3">
    <source>
        <dbReference type="SAM" id="MobiDB-lite"/>
    </source>
</evidence>
<evidence type="ECO:0000269" key="4">
    <source>
    </source>
</evidence>
<evidence type="ECO:0000269" key="5">
    <source>
    </source>
</evidence>
<evidence type="ECO:0000269" key="6">
    <source>
    </source>
</evidence>
<evidence type="ECO:0000305" key="7"/>
<sequence length="893" mass="101335">MDKQSTFQDPKEKHRIQRDVKLSRPRKRFSFLDYVVVIFLTVVAFCVRAQRLMNPAKVVFEELRYYNYAVDYVNNKLLMDVYPPLGKLLFSLVAALTGNKYELNTLDEPGQQYPFTDVAYSMRLFTCLLGSLLVPLMYGTVYFPTKSKTAASLAALFVIFDNGLITMSRYIMIEIPALYFMSLTAFYWSVYEAQQKRPFSLRWHTSLLSTGVALGLALSTKLSAMFTFGWLLILAAFHLWNLLGDLSVPMYRIVKHLFSYIFYLIGVPITVYLAVFAVHSHIAYKASVADAFLPPEHRHALAGNRFDDQFADVAYGSLVTIRNAIPEHGYLHSSELLYPEGTEQQIISLVDEPNQNALWIIEHEHSQDNNRSNIELLKDGSVVRLRHVMTGRALHSHEHKPIVSNNDWQLEASAYGGFGFEGDANDLFRIQILEKKSKHATSNGTVETLNTKFRLIHVFANCELMSSHRRFPDWGDYQREVTCCRNCVERSTTWFIESNYHDGLPSDSRKITYRKPGFLESFVEHNKLMWLKDRKMGDGHVYESSALTWPLLLGPLRFFYEQHLQVFFMGNPFVWYSVISLVAFFVIVQIFCLARWNLGYNDFGPSAFHYNYNIGKFVVAWLLHWAPYILETDRVFLYHYLPALYFGIAALGVSWSFLGNAVFGNRTAYKALSVIIMALMFLVYRLYSPFTYMTTLTKSSCRALELKGSWNFHCNTYLDNLSDYKFSSDAGETYFEKAAPHPFVYSEDTAKKSEGDTPLNKNLNDYYPSWDQRVEAGYKLAAQQKAEQEAREAAEKAASEAAERSSSEAAASSSSESVAAASVEAERLAMEADEFNGASETVDGASVEAERSAMEAAALNNAAESTEVVGSSPESVASEQEENVAESAQARVE</sequence>
<name>PMT1_SCHPO</name>
<dbReference type="EC" id="2.4.1.109"/>
<dbReference type="EMBL" id="CU329670">
    <property type="protein sequence ID" value="CAB16577.1"/>
    <property type="molecule type" value="Genomic_DNA"/>
</dbReference>
<dbReference type="PIR" id="T38147">
    <property type="entry name" value="T38147"/>
</dbReference>
<dbReference type="RefSeq" id="NP_593237.1">
    <property type="nucleotide sequence ID" value="NM_001018634.2"/>
</dbReference>
<dbReference type="SMR" id="O13898"/>
<dbReference type="BioGRID" id="277924">
    <property type="interactions" value="5"/>
</dbReference>
<dbReference type="FunCoup" id="O13898">
    <property type="interactions" value="196"/>
</dbReference>
<dbReference type="STRING" id="284812.O13898"/>
<dbReference type="CAZy" id="GT39">
    <property type="family name" value="Glycosyltransferase Family 39"/>
</dbReference>
<dbReference type="GlyCosmos" id="O13898">
    <property type="glycosylation" value="4 sites, No reported glycans"/>
</dbReference>
<dbReference type="iPTMnet" id="O13898"/>
<dbReference type="PaxDb" id="4896-SPAC22A12.07c.1"/>
<dbReference type="EnsemblFungi" id="SPAC22A12.07c.1">
    <property type="protein sequence ID" value="SPAC22A12.07c.1:pep"/>
    <property type="gene ID" value="SPAC22A12.07c"/>
</dbReference>
<dbReference type="GeneID" id="2541418"/>
<dbReference type="KEGG" id="spo:2541418"/>
<dbReference type="PomBase" id="SPAC22A12.07c">
    <property type="gene designation" value="ogm1"/>
</dbReference>
<dbReference type="VEuPathDB" id="FungiDB:SPAC22A12.07c"/>
<dbReference type="eggNOG" id="KOG3359">
    <property type="taxonomic scope" value="Eukaryota"/>
</dbReference>
<dbReference type="HOGENOM" id="CLU_008438_2_1_1"/>
<dbReference type="InParanoid" id="O13898"/>
<dbReference type="OMA" id="WAPYILE"/>
<dbReference type="PhylomeDB" id="O13898"/>
<dbReference type="BRENDA" id="2.4.1.109">
    <property type="organism ID" value="5613"/>
</dbReference>
<dbReference type="UniPathway" id="UPA00378"/>
<dbReference type="PRO" id="PR:O13898"/>
<dbReference type="Proteomes" id="UP000002485">
    <property type="component" value="Chromosome I"/>
</dbReference>
<dbReference type="GO" id="GO:0012505">
    <property type="term" value="C:endomembrane system"/>
    <property type="evidence" value="ECO:0000314"/>
    <property type="project" value="PomBase"/>
</dbReference>
<dbReference type="GO" id="GO:0005783">
    <property type="term" value="C:endoplasmic reticulum"/>
    <property type="evidence" value="ECO:0000318"/>
    <property type="project" value="GO_Central"/>
</dbReference>
<dbReference type="GO" id="GO:0005789">
    <property type="term" value="C:endoplasmic reticulum membrane"/>
    <property type="evidence" value="ECO:0000314"/>
    <property type="project" value="PomBase"/>
</dbReference>
<dbReference type="GO" id="GO:0031965">
    <property type="term" value="C:nuclear membrane"/>
    <property type="evidence" value="ECO:0007669"/>
    <property type="project" value="UniProtKB-SubCell"/>
</dbReference>
<dbReference type="GO" id="GO:0004169">
    <property type="term" value="F:dolichyl-phosphate-mannose-protein mannosyltransferase activity"/>
    <property type="evidence" value="ECO:0000315"/>
    <property type="project" value="PomBase"/>
</dbReference>
<dbReference type="GO" id="GO:0016757">
    <property type="term" value="F:glycosyltransferase activity"/>
    <property type="evidence" value="ECO:0000269"/>
    <property type="project" value="PomBase"/>
</dbReference>
<dbReference type="GO" id="GO:0035269">
    <property type="term" value="P:protein O-linked mannosylation"/>
    <property type="evidence" value="ECO:0000315"/>
    <property type="project" value="PomBase"/>
</dbReference>
<dbReference type="CDD" id="cd23283">
    <property type="entry name" value="beta-trefoil_MIR_PMT1-like"/>
    <property type="match status" value="1"/>
</dbReference>
<dbReference type="Gene3D" id="2.80.10.50">
    <property type="match status" value="1"/>
</dbReference>
<dbReference type="InterPro" id="IPR027005">
    <property type="entry name" value="GlyclTrfase_39-like"/>
</dbReference>
<dbReference type="InterPro" id="IPR003342">
    <property type="entry name" value="Glyco_trans_39/83"/>
</dbReference>
<dbReference type="InterPro" id="IPR036300">
    <property type="entry name" value="MIR_dom_sf"/>
</dbReference>
<dbReference type="InterPro" id="IPR016093">
    <property type="entry name" value="MIR_motif"/>
</dbReference>
<dbReference type="InterPro" id="IPR032421">
    <property type="entry name" value="PMT_4TMC"/>
</dbReference>
<dbReference type="PANTHER" id="PTHR10050">
    <property type="entry name" value="DOLICHYL-PHOSPHATE-MANNOSE--PROTEIN MANNOSYLTRANSFERASE"/>
    <property type="match status" value="1"/>
</dbReference>
<dbReference type="PANTHER" id="PTHR10050:SF50">
    <property type="entry name" value="DOLICHYL-PHOSPHATE-MANNOSE--PROTEIN MANNOSYLTRANSFERASE 1-RELATED"/>
    <property type="match status" value="1"/>
</dbReference>
<dbReference type="Pfam" id="PF02815">
    <property type="entry name" value="MIR"/>
    <property type="match status" value="1"/>
</dbReference>
<dbReference type="Pfam" id="PF02366">
    <property type="entry name" value="PMT"/>
    <property type="match status" value="1"/>
</dbReference>
<dbReference type="Pfam" id="PF16192">
    <property type="entry name" value="PMT_4TMC"/>
    <property type="match status" value="1"/>
</dbReference>
<dbReference type="SMART" id="SM00472">
    <property type="entry name" value="MIR"/>
    <property type="match status" value="3"/>
</dbReference>
<dbReference type="SUPFAM" id="SSF82109">
    <property type="entry name" value="MIR domain"/>
    <property type="match status" value="1"/>
</dbReference>
<dbReference type="PROSITE" id="PS50919">
    <property type="entry name" value="MIR"/>
    <property type="match status" value="3"/>
</dbReference>
<protein>
    <recommendedName>
        <fullName>Dolichyl-phosphate-mannose--protein mannosyltransferase 1</fullName>
        <ecNumber>2.4.1.109</ecNumber>
    </recommendedName>
</protein>